<organism>
    <name type="scientific">Clavibacter michiganensis subsp. michiganensis (strain NCPPB 382)</name>
    <dbReference type="NCBI Taxonomy" id="443906"/>
    <lineage>
        <taxon>Bacteria</taxon>
        <taxon>Bacillati</taxon>
        <taxon>Actinomycetota</taxon>
        <taxon>Actinomycetes</taxon>
        <taxon>Micrococcales</taxon>
        <taxon>Microbacteriaceae</taxon>
        <taxon>Clavibacter</taxon>
    </lineage>
</organism>
<comment type="catalytic activity">
    <reaction evidence="1">
        <text>alpha-D-xylose = alpha-D-xylulofuranose</text>
        <dbReference type="Rhea" id="RHEA:22816"/>
        <dbReference type="ChEBI" id="CHEBI:28518"/>
        <dbReference type="ChEBI" id="CHEBI:188998"/>
        <dbReference type="EC" id="5.3.1.5"/>
    </reaction>
</comment>
<comment type="cofactor">
    <cofactor evidence="1">
        <name>Mg(2+)</name>
        <dbReference type="ChEBI" id="CHEBI:18420"/>
    </cofactor>
    <text evidence="1">Binds 2 magnesium ions per subunit.</text>
</comment>
<comment type="subunit">
    <text evidence="1">Homotetramer.</text>
</comment>
<comment type="subcellular location">
    <subcellularLocation>
        <location evidence="1">Cytoplasm</location>
    </subcellularLocation>
</comment>
<comment type="similarity">
    <text evidence="1">Belongs to the xylose isomerase family.</text>
</comment>
<sequence length="397" mass="43837">MALTPTREDKFSFGLWTIGYTGADPFGGPTRSDLDVVEGVERISELGAYGLTFHDDDLFAFGSTDAERQTQIDRLKGALSDTGIVVPMVTTNLFSAPVFKDGGFTSNDRAVRRFAIRKVLRNIDLAAELGAQTFVMWGGREGAEYDSAKDVRGALERYREAVNLLGDYVTDKGYDIRFAIEPKPNEPRGDILLPTLGHALAFIETLERPELVGVNPEVGHEQMAGLNFTAGIMQALYQGKLFHIDLNGQRGIKYDQDLVFGHGDLQNAFSLVDLLENGGVGGGRSYDGPRHFDYKPSRTEDITGVWDSAAANMRMYLLLKERAQAFRADPEVQEALAAAKVQEIYTPTLNEGESYDDILADRSSYEDFDAPSYFDAKGFGFVRLNQLALEHLMGARS</sequence>
<gene>
    <name evidence="1" type="primary">xylA</name>
    <name type="ordered locus">CMM_0882</name>
</gene>
<name>XYLA_CLAM3</name>
<reference key="1">
    <citation type="journal article" date="2008" name="J. Bacteriol.">
        <title>The genome sequence of the tomato-pathogenic actinomycete Clavibacter michiganensis subsp. michiganensis NCPPB382 reveals a large island involved in pathogenicity.</title>
        <authorList>
            <person name="Gartemann K.-H."/>
            <person name="Abt B."/>
            <person name="Bekel T."/>
            <person name="Burger A."/>
            <person name="Engemann J."/>
            <person name="Fluegel M."/>
            <person name="Gaigalat L."/>
            <person name="Goesmann A."/>
            <person name="Graefen I."/>
            <person name="Kalinowski J."/>
            <person name="Kaup O."/>
            <person name="Kirchner O."/>
            <person name="Krause L."/>
            <person name="Linke B."/>
            <person name="McHardy A."/>
            <person name="Meyer F."/>
            <person name="Pohle S."/>
            <person name="Rueckert C."/>
            <person name="Schneiker S."/>
            <person name="Zellermann E.-M."/>
            <person name="Puehler A."/>
            <person name="Eichenlaub R."/>
            <person name="Kaiser O."/>
            <person name="Bartels D."/>
        </authorList>
    </citation>
    <scope>NUCLEOTIDE SEQUENCE [LARGE SCALE GENOMIC DNA]</scope>
    <source>
        <strain>NCPPB 382</strain>
    </source>
</reference>
<feature type="chain" id="PRO_1000026438" description="Xylose isomerase">
    <location>
        <begin position="1"/>
        <end position="397"/>
    </location>
</feature>
<feature type="active site" evidence="1">
    <location>
        <position position="54"/>
    </location>
</feature>
<feature type="active site" evidence="1">
    <location>
        <position position="57"/>
    </location>
</feature>
<feature type="binding site" evidence="1">
    <location>
        <position position="181"/>
    </location>
    <ligand>
        <name>Mg(2+)</name>
        <dbReference type="ChEBI" id="CHEBI:18420"/>
        <label>1</label>
    </ligand>
</feature>
<feature type="binding site" evidence="1">
    <location>
        <position position="217"/>
    </location>
    <ligand>
        <name>Mg(2+)</name>
        <dbReference type="ChEBI" id="CHEBI:18420"/>
        <label>1</label>
    </ligand>
</feature>
<feature type="binding site" evidence="1">
    <location>
        <position position="217"/>
    </location>
    <ligand>
        <name>Mg(2+)</name>
        <dbReference type="ChEBI" id="CHEBI:18420"/>
        <label>2</label>
    </ligand>
</feature>
<feature type="binding site" evidence="1">
    <location>
        <position position="220"/>
    </location>
    <ligand>
        <name>Mg(2+)</name>
        <dbReference type="ChEBI" id="CHEBI:18420"/>
        <label>2</label>
    </ligand>
</feature>
<feature type="binding site" evidence="1">
    <location>
        <position position="245"/>
    </location>
    <ligand>
        <name>Mg(2+)</name>
        <dbReference type="ChEBI" id="CHEBI:18420"/>
        <label>1</label>
    </ligand>
</feature>
<feature type="binding site" evidence="1">
    <location>
        <position position="255"/>
    </location>
    <ligand>
        <name>Mg(2+)</name>
        <dbReference type="ChEBI" id="CHEBI:18420"/>
        <label>2</label>
    </ligand>
</feature>
<feature type="binding site" evidence="1">
    <location>
        <position position="257"/>
    </location>
    <ligand>
        <name>Mg(2+)</name>
        <dbReference type="ChEBI" id="CHEBI:18420"/>
        <label>2</label>
    </ligand>
</feature>
<feature type="binding site" evidence="1">
    <location>
        <position position="293"/>
    </location>
    <ligand>
        <name>Mg(2+)</name>
        <dbReference type="ChEBI" id="CHEBI:18420"/>
        <label>1</label>
    </ligand>
</feature>
<protein>
    <recommendedName>
        <fullName evidence="1">Xylose isomerase</fullName>
        <ecNumber evidence="1">5.3.1.5</ecNumber>
    </recommendedName>
</protein>
<keyword id="KW-0119">Carbohydrate metabolism</keyword>
<keyword id="KW-0963">Cytoplasm</keyword>
<keyword id="KW-0413">Isomerase</keyword>
<keyword id="KW-0460">Magnesium</keyword>
<keyword id="KW-0479">Metal-binding</keyword>
<keyword id="KW-0859">Xylose metabolism</keyword>
<accession>A5CPC1</accession>
<evidence type="ECO:0000255" key="1">
    <source>
        <dbReference type="HAMAP-Rule" id="MF_00455"/>
    </source>
</evidence>
<dbReference type="EC" id="5.3.1.5" evidence="1"/>
<dbReference type="EMBL" id="AM711867">
    <property type="protein sequence ID" value="CAN00919.1"/>
    <property type="molecule type" value="Genomic_DNA"/>
</dbReference>
<dbReference type="RefSeq" id="WP_012037567.1">
    <property type="nucleotide sequence ID" value="NC_009480.1"/>
</dbReference>
<dbReference type="SMR" id="A5CPC1"/>
<dbReference type="GeneID" id="92946841"/>
<dbReference type="KEGG" id="cmi:CMM_0882"/>
<dbReference type="eggNOG" id="COG2115">
    <property type="taxonomic scope" value="Bacteria"/>
</dbReference>
<dbReference type="HOGENOM" id="CLU_060750_0_0_11"/>
<dbReference type="OrthoDB" id="9763981at2"/>
<dbReference type="Proteomes" id="UP000001564">
    <property type="component" value="Chromosome"/>
</dbReference>
<dbReference type="GO" id="GO:0005737">
    <property type="term" value="C:cytoplasm"/>
    <property type="evidence" value="ECO:0007669"/>
    <property type="project" value="UniProtKB-SubCell"/>
</dbReference>
<dbReference type="GO" id="GO:0000287">
    <property type="term" value="F:magnesium ion binding"/>
    <property type="evidence" value="ECO:0007669"/>
    <property type="project" value="UniProtKB-UniRule"/>
</dbReference>
<dbReference type="GO" id="GO:0009045">
    <property type="term" value="F:xylose isomerase activity"/>
    <property type="evidence" value="ECO:0007669"/>
    <property type="project" value="UniProtKB-UniRule"/>
</dbReference>
<dbReference type="GO" id="GO:0042732">
    <property type="term" value="P:D-xylose metabolic process"/>
    <property type="evidence" value="ECO:0007669"/>
    <property type="project" value="UniProtKB-UniRule"/>
</dbReference>
<dbReference type="Gene3D" id="3.20.20.150">
    <property type="entry name" value="Divalent-metal-dependent TIM barrel enzymes"/>
    <property type="match status" value="1"/>
</dbReference>
<dbReference type="HAMAP" id="MF_00455">
    <property type="entry name" value="Xylose_isom_A"/>
    <property type="match status" value="1"/>
</dbReference>
<dbReference type="InterPro" id="IPR036237">
    <property type="entry name" value="Xyl_isomerase-like_sf"/>
</dbReference>
<dbReference type="InterPro" id="IPR013022">
    <property type="entry name" value="Xyl_isomerase-like_TIM-brl"/>
</dbReference>
<dbReference type="InterPro" id="IPR013453">
    <property type="entry name" value="XylA_actinobac"/>
</dbReference>
<dbReference type="InterPro" id="IPR001998">
    <property type="entry name" value="Xylose_isomerase"/>
</dbReference>
<dbReference type="NCBIfam" id="TIGR02631">
    <property type="entry name" value="xylA_Arthro"/>
    <property type="match status" value="1"/>
</dbReference>
<dbReference type="PANTHER" id="PTHR48408">
    <property type="match status" value="1"/>
</dbReference>
<dbReference type="PANTHER" id="PTHR48408:SF1">
    <property type="entry name" value="XYLOSE ISOMERASE"/>
    <property type="match status" value="1"/>
</dbReference>
<dbReference type="Pfam" id="PF01261">
    <property type="entry name" value="AP_endonuc_2"/>
    <property type="match status" value="1"/>
</dbReference>
<dbReference type="PRINTS" id="PR00688">
    <property type="entry name" value="XYLOSISMRASE"/>
</dbReference>
<dbReference type="SUPFAM" id="SSF51658">
    <property type="entry name" value="Xylose isomerase-like"/>
    <property type="match status" value="1"/>
</dbReference>
<dbReference type="PROSITE" id="PS51415">
    <property type="entry name" value="XYLOSE_ISOMERASE"/>
    <property type="match status" value="1"/>
</dbReference>
<proteinExistence type="inferred from homology"/>